<organism>
    <name type="scientific">Proteus mirabilis (strain HI4320)</name>
    <dbReference type="NCBI Taxonomy" id="529507"/>
    <lineage>
        <taxon>Bacteria</taxon>
        <taxon>Pseudomonadati</taxon>
        <taxon>Pseudomonadota</taxon>
        <taxon>Gammaproteobacteria</taxon>
        <taxon>Enterobacterales</taxon>
        <taxon>Morganellaceae</taxon>
        <taxon>Proteus</taxon>
    </lineage>
</organism>
<proteinExistence type="inferred from homology"/>
<name>RL5_PROMH</name>
<accession>B4F1J6</accession>
<feature type="chain" id="PRO_1000142433" description="Large ribosomal subunit protein uL5">
    <location>
        <begin position="1"/>
        <end position="179"/>
    </location>
</feature>
<protein>
    <recommendedName>
        <fullName evidence="1">Large ribosomal subunit protein uL5</fullName>
    </recommendedName>
    <alternativeName>
        <fullName evidence="2">50S ribosomal protein L5</fullName>
    </alternativeName>
</protein>
<sequence length="179" mass="20223">MAKLHDYYKDEVVQKLMSQFGYHSVMQVPRVEKITLNMGVGEAIADKKLLDNAAADLAAISGQKPLITKARKSVAGFKIRQGYPIGCKVTLRGERMWEFFERLISIAVPRIRDFRGLSAKSFDGRGNYSMGVREQIIFPEIDYDKVDRVRGLDITITTTAKSDDEGRALLAAFNFPFRK</sequence>
<gene>
    <name evidence="1" type="primary">rplE</name>
    <name type="ordered locus">PMI3267</name>
</gene>
<comment type="function">
    <text evidence="1">This is one of the proteins that bind and probably mediate the attachment of the 5S RNA into the large ribosomal subunit, where it forms part of the central protuberance. In the 70S ribosome it contacts protein S13 of the 30S subunit (bridge B1b), connecting the 2 subunits; this bridge is implicated in subunit movement. Contacts the P site tRNA; the 5S rRNA and some of its associated proteins might help stabilize positioning of ribosome-bound tRNAs.</text>
</comment>
<comment type="subunit">
    <text evidence="1">Part of the 50S ribosomal subunit; part of the 5S rRNA/L5/L18/L25 subcomplex. Contacts the 5S rRNA and the P site tRNA. Forms a bridge to the 30S subunit in the 70S ribosome.</text>
</comment>
<comment type="similarity">
    <text evidence="1">Belongs to the universal ribosomal protein uL5 family.</text>
</comment>
<reference key="1">
    <citation type="journal article" date="2008" name="J. Bacteriol.">
        <title>Complete genome sequence of uropathogenic Proteus mirabilis, a master of both adherence and motility.</title>
        <authorList>
            <person name="Pearson M.M."/>
            <person name="Sebaihia M."/>
            <person name="Churcher C."/>
            <person name="Quail M.A."/>
            <person name="Seshasayee A.S."/>
            <person name="Luscombe N.M."/>
            <person name="Abdellah Z."/>
            <person name="Arrosmith C."/>
            <person name="Atkin B."/>
            <person name="Chillingworth T."/>
            <person name="Hauser H."/>
            <person name="Jagels K."/>
            <person name="Moule S."/>
            <person name="Mungall K."/>
            <person name="Norbertczak H."/>
            <person name="Rabbinowitsch E."/>
            <person name="Walker D."/>
            <person name="Whithead S."/>
            <person name="Thomson N.R."/>
            <person name="Rather P.N."/>
            <person name="Parkhill J."/>
            <person name="Mobley H.L.T."/>
        </authorList>
    </citation>
    <scope>NUCLEOTIDE SEQUENCE [LARGE SCALE GENOMIC DNA]</scope>
    <source>
        <strain>HI4320</strain>
    </source>
</reference>
<evidence type="ECO:0000255" key="1">
    <source>
        <dbReference type="HAMAP-Rule" id="MF_01333"/>
    </source>
</evidence>
<evidence type="ECO:0000305" key="2"/>
<dbReference type="EMBL" id="AM942759">
    <property type="protein sequence ID" value="CAR46400.1"/>
    <property type="molecule type" value="Genomic_DNA"/>
</dbReference>
<dbReference type="RefSeq" id="WP_004246952.1">
    <property type="nucleotide sequence ID" value="NC_010554.1"/>
</dbReference>
<dbReference type="SMR" id="B4F1J6"/>
<dbReference type="EnsemblBacteria" id="CAR46400">
    <property type="protein sequence ID" value="CAR46400"/>
    <property type="gene ID" value="PMI3267"/>
</dbReference>
<dbReference type="GeneID" id="83614242"/>
<dbReference type="KEGG" id="pmr:PMI3267"/>
<dbReference type="eggNOG" id="COG0094">
    <property type="taxonomic scope" value="Bacteria"/>
</dbReference>
<dbReference type="HOGENOM" id="CLU_061015_2_1_6"/>
<dbReference type="Proteomes" id="UP000008319">
    <property type="component" value="Chromosome"/>
</dbReference>
<dbReference type="GO" id="GO:1990904">
    <property type="term" value="C:ribonucleoprotein complex"/>
    <property type="evidence" value="ECO:0007669"/>
    <property type="project" value="UniProtKB-KW"/>
</dbReference>
<dbReference type="GO" id="GO:0005840">
    <property type="term" value="C:ribosome"/>
    <property type="evidence" value="ECO:0007669"/>
    <property type="project" value="UniProtKB-KW"/>
</dbReference>
<dbReference type="GO" id="GO:0019843">
    <property type="term" value="F:rRNA binding"/>
    <property type="evidence" value="ECO:0007669"/>
    <property type="project" value="UniProtKB-UniRule"/>
</dbReference>
<dbReference type="GO" id="GO:0003735">
    <property type="term" value="F:structural constituent of ribosome"/>
    <property type="evidence" value="ECO:0007669"/>
    <property type="project" value="InterPro"/>
</dbReference>
<dbReference type="GO" id="GO:0000049">
    <property type="term" value="F:tRNA binding"/>
    <property type="evidence" value="ECO:0007669"/>
    <property type="project" value="UniProtKB-UniRule"/>
</dbReference>
<dbReference type="GO" id="GO:0006412">
    <property type="term" value="P:translation"/>
    <property type="evidence" value="ECO:0007669"/>
    <property type="project" value="UniProtKB-UniRule"/>
</dbReference>
<dbReference type="FunFam" id="3.30.1440.10:FF:000001">
    <property type="entry name" value="50S ribosomal protein L5"/>
    <property type="match status" value="1"/>
</dbReference>
<dbReference type="Gene3D" id="3.30.1440.10">
    <property type="match status" value="1"/>
</dbReference>
<dbReference type="HAMAP" id="MF_01333_B">
    <property type="entry name" value="Ribosomal_uL5_B"/>
    <property type="match status" value="1"/>
</dbReference>
<dbReference type="InterPro" id="IPR002132">
    <property type="entry name" value="Ribosomal_uL5"/>
</dbReference>
<dbReference type="InterPro" id="IPR020930">
    <property type="entry name" value="Ribosomal_uL5_bac-type"/>
</dbReference>
<dbReference type="InterPro" id="IPR031309">
    <property type="entry name" value="Ribosomal_uL5_C"/>
</dbReference>
<dbReference type="InterPro" id="IPR020929">
    <property type="entry name" value="Ribosomal_uL5_CS"/>
</dbReference>
<dbReference type="InterPro" id="IPR022803">
    <property type="entry name" value="Ribosomal_uL5_dom_sf"/>
</dbReference>
<dbReference type="InterPro" id="IPR031310">
    <property type="entry name" value="Ribosomal_uL5_N"/>
</dbReference>
<dbReference type="NCBIfam" id="NF000585">
    <property type="entry name" value="PRK00010.1"/>
    <property type="match status" value="1"/>
</dbReference>
<dbReference type="PANTHER" id="PTHR11994">
    <property type="entry name" value="60S RIBOSOMAL PROTEIN L11-RELATED"/>
    <property type="match status" value="1"/>
</dbReference>
<dbReference type="Pfam" id="PF00281">
    <property type="entry name" value="Ribosomal_L5"/>
    <property type="match status" value="1"/>
</dbReference>
<dbReference type="Pfam" id="PF00673">
    <property type="entry name" value="Ribosomal_L5_C"/>
    <property type="match status" value="1"/>
</dbReference>
<dbReference type="PIRSF" id="PIRSF002161">
    <property type="entry name" value="Ribosomal_L5"/>
    <property type="match status" value="1"/>
</dbReference>
<dbReference type="SUPFAM" id="SSF55282">
    <property type="entry name" value="RL5-like"/>
    <property type="match status" value="1"/>
</dbReference>
<dbReference type="PROSITE" id="PS00358">
    <property type="entry name" value="RIBOSOMAL_L5"/>
    <property type="match status" value="1"/>
</dbReference>
<keyword id="KW-1185">Reference proteome</keyword>
<keyword id="KW-0687">Ribonucleoprotein</keyword>
<keyword id="KW-0689">Ribosomal protein</keyword>
<keyword id="KW-0694">RNA-binding</keyword>
<keyword id="KW-0699">rRNA-binding</keyword>
<keyword id="KW-0820">tRNA-binding</keyword>